<reference key="1">
    <citation type="journal article" date="2008" name="Proc. Natl. Acad. Sci. U.S.A.">
        <title>Niche adaptation and genome expansion in the chlorophyll d-producing cyanobacterium Acaryochloris marina.</title>
        <authorList>
            <person name="Swingley W.D."/>
            <person name="Chen M."/>
            <person name="Cheung P.C."/>
            <person name="Conrad A.L."/>
            <person name="Dejesa L.C."/>
            <person name="Hao J."/>
            <person name="Honchak B.M."/>
            <person name="Karbach L.E."/>
            <person name="Kurdoglu A."/>
            <person name="Lahiri S."/>
            <person name="Mastrian S.D."/>
            <person name="Miyashita H."/>
            <person name="Page L."/>
            <person name="Ramakrishna P."/>
            <person name="Satoh S."/>
            <person name="Sattley W.M."/>
            <person name="Shimada Y."/>
            <person name="Taylor H.L."/>
            <person name="Tomo T."/>
            <person name="Tsuchiya T."/>
            <person name="Wang Z.T."/>
            <person name="Raymond J."/>
            <person name="Mimuro M."/>
            <person name="Blankenship R.E."/>
            <person name="Touchman J.W."/>
        </authorList>
    </citation>
    <scope>NUCLEOTIDE SEQUENCE [LARGE SCALE GENOMIC DNA]</scope>
    <source>
        <strain>MBIC 11017</strain>
    </source>
</reference>
<feature type="chain" id="PRO_0000349494" description="tRNA-specific 2-thiouridylase MnmA">
    <location>
        <begin position="1"/>
        <end position="355"/>
    </location>
</feature>
<feature type="region of interest" description="Interaction with tRNA" evidence="1">
    <location>
        <begin position="143"/>
        <end position="145"/>
    </location>
</feature>
<feature type="region of interest" description="Interaction with tRNA" evidence="1">
    <location>
        <begin position="298"/>
        <end position="299"/>
    </location>
</feature>
<feature type="active site" description="Nucleophile" evidence="1">
    <location>
        <position position="94"/>
    </location>
</feature>
<feature type="active site" description="Cysteine persulfide intermediate" evidence="1">
    <location>
        <position position="193"/>
    </location>
</feature>
<feature type="binding site" evidence="1">
    <location>
        <begin position="7"/>
        <end position="14"/>
    </location>
    <ligand>
        <name>ATP</name>
        <dbReference type="ChEBI" id="CHEBI:30616"/>
    </ligand>
</feature>
<feature type="binding site" evidence="1">
    <location>
        <position position="33"/>
    </location>
    <ligand>
        <name>ATP</name>
        <dbReference type="ChEBI" id="CHEBI:30616"/>
    </ligand>
</feature>
<feature type="binding site" evidence="1">
    <location>
        <position position="119"/>
    </location>
    <ligand>
        <name>ATP</name>
        <dbReference type="ChEBI" id="CHEBI:30616"/>
    </ligand>
</feature>
<feature type="site" description="Interaction with tRNA" evidence="1">
    <location>
        <position position="120"/>
    </location>
</feature>
<feature type="site" description="Interaction with tRNA" evidence="1">
    <location>
        <position position="335"/>
    </location>
</feature>
<feature type="disulfide bond" description="Alternate" evidence="1">
    <location>
        <begin position="94"/>
        <end position="193"/>
    </location>
</feature>
<sequence>MKKVVVGLSGGVDSSVAAASLKEKGYEVIGLTLWLMQGKGQCCSDGLVDAAQLCEDLDIPHHVVDSRDLFSNNIIDYLVEGYQQGITPLPCSQCNKTVKFGPMLNYARHELDTDTIATGHYARIAYSEKEKRYQLLRAVDRNKDQSYFLYDLDQDLLSGTVFPLGDHTKTETRRMATQLDLHTAEKPESQDLCLIEAHGSMQTFLDQYIETHPGEIVDQEGNILGHHQGVHHFTIGQRRGIGVAAPHPLYVVDLDPGKNRVIVGDRETALKTECMVKRVNWVSIAPPQNPIHAEVQVRYRSKPTGVTIIPLDAEAPGGRVKLVFEDPQFGIAPGQAAVWYDQEILLGGGIIEAFS</sequence>
<keyword id="KW-0067">ATP-binding</keyword>
<keyword id="KW-0963">Cytoplasm</keyword>
<keyword id="KW-1015">Disulfide bond</keyword>
<keyword id="KW-0547">Nucleotide-binding</keyword>
<keyword id="KW-1185">Reference proteome</keyword>
<keyword id="KW-0694">RNA-binding</keyword>
<keyword id="KW-0808">Transferase</keyword>
<keyword id="KW-0819">tRNA processing</keyword>
<keyword id="KW-0820">tRNA-binding</keyword>
<dbReference type="EC" id="2.8.1.13" evidence="1"/>
<dbReference type="EMBL" id="CP000828">
    <property type="protein sequence ID" value="ABW30513.1"/>
    <property type="molecule type" value="Genomic_DNA"/>
</dbReference>
<dbReference type="RefSeq" id="WP_012165735.1">
    <property type="nucleotide sequence ID" value="NC_009925.1"/>
</dbReference>
<dbReference type="SMR" id="B0CE39"/>
<dbReference type="STRING" id="329726.AM1_5559"/>
<dbReference type="KEGG" id="amr:AM1_5559"/>
<dbReference type="eggNOG" id="COG0482">
    <property type="taxonomic scope" value="Bacteria"/>
</dbReference>
<dbReference type="HOGENOM" id="CLU_035188_0_0_3"/>
<dbReference type="OrthoDB" id="9800696at2"/>
<dbReference type="Proteomes" id="UP000000268">
    <property type="component" value="Chromosome"/>
</dbReference>
<dbReference type="GO" id="GO:0005737">
    <property type="term" value="C:cytoplasm"/>
    <property type="evidence" value="ECO:0007669"/>
    <property type="project" value="UniProtKB-SubCell"/>
</dbReference>
<dbReference type="GO" id="GO:0005524">
    <property type="term" value="F:ATP binding"/>
    <property type="evidence" value="ECO:0007669"/>
    <property type="project" value="UniProtKB-KW"/>
</dbReference>
<dbReference type="GO" id="GO:0000049">
    <property type="term" value="F:tRNA binding"/>
    <property type="evidence" value="ECO:0007669"/>
    <property type="project" value="UniProtKB-KW"/>
</dbReference>
<dbReference type="GO" id="GO:0103016">
    <property type="term" value="F:tRNA-uridine 2-sulfurtransferase activity"/>
    <property type="evidence" value="ECO:0007669"/>
    <property type="project" value="UniProtKB-EC"/>
</dbReference>
<dbReference type="GO" id="GO:0002143">
    <property type="term" value="P:tRNA wobble position uridine thiolation"/>
    <property type="evidence" value="ECO:0007669"/>
    <property type="project" value="TreeGrafter"/>
</dbReference>
<dbReference type="CDD" id="cd01998">
    <property type="entry name" value="MnmA_TRMU-like"/>
    <property type="match status" value="1"/>
</dbReference>
<dbReference type="FunFam" id="2.30.30.280:FF:000001">
    <property type="entry name" value="tRNA-specific 2-thiouridylase MnmA"/>
    <property type="match status" value="1"/>
</dbReference>
<dbReference type="FunFam" id="3.40.50.620:FF:000302">
    <property type="entry name" value="tRNA-specific 2-thiouridylase MnmA"/>
    <property type="match status" value="1"/>
</dbReference>
<dbReference type="Gene3D" id="2.30.30.280">
    <property type="entry name" value="Adenine nucleotide alpha hydrolases-like domains"/>
    <property type="match status" value="1"/>
</dbReference>
<dbReference type="Gene3D" id="3.40.50.620">
    <property type="entry name" value="HUPs"/>
    <property type="match status" value="1"/>
</dbReference>
<dbReference type="Gene3D" id="2.40.30.10">
    <property type="entry name" value="Translation factors"/>
    <property type="match status" value="1"/>
</dbReference>
<dbReference type="HAMAP" id="MF_00144">
    <property type="entry name" value="tRNA_thiouridyl_MnmA"/>
    <property type="match status" value="1"/>
</dbReference>
<dbReference type="InterPro" id="IPR004506">
    <property type="entry name" value="MnmA-like"/>
</dbReference>
<dbReference type="InterPro" id="IPR046885">
    <property type="entry name" value="MnmA-like_C"/>
</dbReference>
<dbReference type="InterPro" id="IPR046884">
    <property type="entry name" value="MnmA-like_central"/>
</dbReference>
<dbReference type="InterPro" id="IPR023382">
    <property type="entry name" value="MnmA-like_central_sf"/>
</dbReference>
<dbReference type="InterPro" id="IPR014729">
    <property type="entry name" value="Rossmann-like_a/b/a_fold"/>
</dbReference>
<dbReference type="NCBIfam" id="NF001138">
    <property type="entry name" value="PRK00143.1"/>
    <property type="match status" value="1"/>
</dbReference>
<dbReference type="NCBIfam" id="TIGR00420">
    <property type="entry name" value="trmU"/>
    <property type="match status" value="1"/>
</dbReference>
<dbReference type="PANTHER" id="PTHR11933:SF5">
    <property type="entry name" value="MITOCHONDRIAL TRNA-SPECIFIC 2-THIOURIDYLASE 1"/>
    <property type="match status" value="1"/>
</dbReference>
<dbReference type="PANTHER" id="PTHR11933">
    <property type="entry name" value="TRNA 5-METHYLAMINOMETHYL-2-THIOURIDYLATE -METHYLTRANSFERASE"/>
    <property type="match status" value="1"/>
</dbReference>
<dbReference type="Pfam" id="PF03054">
    <property type="entry name" value="tRNA_Me_trans"/>
    <property type="match status" value="1"/>
</dbReference>
<dbReference type="Pfam" id="PF20258">
    <property type="entry name" value="tRNA_Me_trans_C"/>
    <property type="match status" value="1"/>
</dbReference>
<dbReference type="Pfam" id="PF20259">
    <property type="entry name" value="tRNA_Me_trans_M"/>
    <property type="match status" value="1"/>
</dbReference>
<dbReference type="SUPFAM" id="SSF52402">
    <property type="entry name" value="Adenine nucleotide alpha hydrolases-like"/>
    <property type="match status" value="1"/>
</dbReference>
<proteinExistence type="inferred from homology"/>
<comment type="function">
    <text evidence="1">Catalyzes the 2-thiolation of uridine at the wobble position (U34) of tRNA, leading to the formation of s(2)U34.</text>
</comment>
<comment type="catalytic activity">
    <reaction evidence="1">
        <text>S-sulfanyl-L-cysteinyl-[protein] + uridine(34) in tRNA + AH2 + ATP = 2-thiouridine(34) in tRNA + L-cysteinyl-[protein] + A + AMP + diphosphate + H(+)</text>
        <dbReference type="Rhea" id="RHEA:47032"/>
        <dbReference type="Rhea" id="RHEA-COMP:10131"/>
        <dbReference type="Rhea" id="RHEA-COMP:11726"/>
        <dbReference type="Rhea" id="RHEA-COMP:11727"/>
        <dbReference type="Rhea" id="RHEA-COMP:11728"/>
        <dbReference type="ChEBI" id="CHEBI:13193"/>
        <dbReference type="ChEBI" id="CHEBI:15378"/>
        <dbReference type="ChEBI" id="CHEBI:17499"/>
        <dbReference type="ChEBI" id="CHEBI:29950"/>
        <dbReference type="ChEBI" id="CHEBI:30616"/>
        <dbReference type="ChEBI" id="CHEBI:33019"/>
        <dbReference type="ChEBI" id="CHEBI:61963"/>
        <dbReference type="ChEBI" id="CHEBI:65315"/>
        <dbReference type="ChEBI" id="CHEBI:87170"/>
        <dbReference type="ChEBI" id="CHEBI:456215"/>
        <dbReference type="EC" id="2.8.1.13"/>
    </reaction>
</comment>
<comment type="subcellular location">
    <subcellularLocation>
        <location evidence="1">Cytoplasm</location>
    </subcellularLocation>
</comment>
<comment type="similarity">
    <text evidence="1">Belongs to the MnmA/TRMU family.</text>
</comment>
<accession>B0CE39</accession>
<protein>
    <recommendedName>
        <fullName evidence="1">tRNA-specific 2-thiouridylase MnmA</fullName>
        <ecNumber evidence="1">2.8.1.13</ecNumber>
    </recommendedName>
</protein>
<evidence type="ECO:0000255" key="1">
    <source>
        <dbReference type="HAMAP-Rule" id="MF_00144"/>
    </source>
</evidence>
<gene>
    <name evidence="1" type="primary">mnmA</name>
    <name type="ordered locus">AM1_5559</name>
</gene>
<name>MNMA_ACAM1</name>
<organism>
    <name type="scientific">Acaryochloris marina (strain MBIC 11017)</name>
    <dbReference type="NCBI Taxonomy" id="329726"/>
    <lineage>
        <taxon>Bacteria</taxon>
        <taxon>Bacillati</taxon>
        <taxon>Cyanobacteriota</taxon>
        <taxon>Cyanophyceae</taxon>
        <taxon>Acaryochloridales</taxon>
        <taxon>Acaryochloridaceae</taxon>
        <taxon>Acaryochloris</taxon>
    </lineage>
</organism>